<feature type="chain" id="PRO_0000459751" description="Levansucrase LscC">
    <location>
        <begin position="1"/>
        <end position="431"/>
    </location>
</feature>
<feature type="active site" description="Nucleophile" evidence="1">
    <location>
        <position position="62"/>
    </location>
</feature>
<feature type="active site" description="Proton donor/acceptor" evidence="1">
    <location>
        <position position="303"/>
    </location>
</feature>
<feature type="binding site" evidence="1">
    <location>
        <position position="61"/>
    </location>
    <ligand>
        <name>sucrose</name>
        <dbReference type="ChEBI" id="CHEBI:17992"/>
    </ligand>
</feature>
<feature type="binding site" evidence="1">
    <location>
        <position position="62"/>
    </location>
    <ligand>
        <name>sucrose</name>
        <dbReference type="ChEBI" id="CHEBI:17992"/>
    </ligand>
</feature>
<feature type="binding site" evidence="1">
    <location>
        <position position="148"/>
    </location>
    <ligand>
        <name>sucrose</name>
        <dbReference type="ChEBI" id="CHEBI:17992"/>
    </ligand>
</feature>
<feature type="binding site" evidence="1">
    <location>
        <position position="218"/>
    </location>
    <ligand>
        <name>sucrose</name>
        <dbReference type="ChEBI" id="CHEBI:17992"/>
    </ligand>
</feature>
<feature type="binding site" evidence="1">
    <location>
        <position position="219"/>
    </location>
    <ligand>
        <name>sucrose</name>
        <dbReference type="ChEBI" id="CHEBI:17992"/>
    </ligand>
</feature>
<feature type="site" description="Transition state stabilizer" evidence="1">
    <location>
        <position position="219"/>
    </location>
</feature>
<reference key="1">
    <citation type="journal article" date="2001" name="J. Bacteriol.">
        <title>Characterization and mutational analysis of three allelic lsc genes encoding levansucrase in Pseudomonas syringae.</title>
        <authorList>
            <person name="Li H."/>
            <person name="Ullrich M.S."/>
        </authorList>
    </citation>
    <scope>NUCLEOTIDE SEQUENCE [GENOMIC DNA]</scope>
    <scope>PROTEIN SEQUENCE OF 2-22</scope>
    <scope>FUNCTION</scope>
    <scope>CATALYTIC ACTIVITY</scope>
    <scope>SUBCELLULAR LOCATION</scope>
    <scope>DISRUPTION PHENOTYPE</scope>
    <source>
        <strain>PG4180</strain>
    </source>
</reference>
<reference key="2">
    <citation type="journal article" date="2006" name="FEMS Microbiol. Lett.">
        <title>Thermo-responsive expression and differential secretion of the extracellular enzyme levansucrase in the plant pathogenic bacterium Pseudomonas syringae pv. glycinea.</title>
        <authorList>
            <person name="Li H."/>
            <person name="Schenk A."/>
            <person name="Srivastava A."/>
            <person name="Zhurina D."/>
            <person name="Ullrich M.S."/>
        </authorList>
    </citation>
    <scope>SUBCELLULAR LOCATION</scope>
    <scope>INDUCTION</scope>
    <source>
        <strain>PG4180</strain>
    </source>
</reference>
<reference key="3">
    <citation type="journal article" date="2014" name="BMC Microbiol.">
        <title>The conserved upstream region of lscB/C determines expression of different levansucrase genes in plant pathogen Pseudomonas syringae.</title>
        <authorList>
            <person name="Khandekar S."/>
            <person name="Srivastava A."/>
            <person name="Pletzer D."/>
            <person name="Stahl A."/>
            <person name="Ullrich M.S."/>
        </authorList>
    </citation>
    <scope>TRANSCRIPTIONAL REGULATION</scope>
    <source>
        <strain>PG4180</strain>
    </source>
</reference>
<reference key="4">
    <citation type="journal article" date="2016" name="Mol. Microbiol.">
        <title>The bacteriophage-derived transcriptional regulator, LscR, activates the expression of levansucrase genes in Pseudomonas syringae.</title>
        <authorList>
            <person name="Abdallah K."/>
            <person name="Hartman K."/>
            <person name="Pletzer D."/>
            <person name="Zhurina D."/>
            <person name="Ullrich M.S."/>
        </authorList>
    </citation>
    <scope>TRANSCRIPTIONAL REGULATION</scope>
    <source>
        <strain>PG4180</strain>
    </source>
</reference>
<evidence type="ECO:0000250" key="1">
    <source>
        <dbReference type="UniProtKB" id="P05655"/>
    </source>
</evidence>
<evidence type="ECO:0000269" key="2">
    <source>
    </source>
</evidence>
<evidence type="ECO:0000269" key="3">
    <source>
    </source>
</evidence>
<evidence type="ECO:0000269" key="4">
    <source>
    </source>
</evidence>
<evidence type="ECO:0000269" key="5">
    <source>
    </source>
</evidence>
<evidence type="ECO:0000303" key="6">
    <source>
    </source>
</evidence>
<evidence type="ECO:0000305" key="7"/>
<gene>
    <name evidence="6" type="primary">lscC</name>
</gene>
<name>LSCC_PSESG</name>
<accession>Q93TM1</accession>
<organism>
    <name type="scientific">Pseudomonas savastanoi pv. glycinea</name>
    <name type="common">Pseudomonas syringae pv. glycinea</name>
    <dbReference type="NCBI Taxonomy" id="318"/>
    <lineage>
        <taxon>Bacteria</taxon>
        <taxon>Pseudomonadati</taxon>
        <taxon>Pseudomonadota</taxon>
        <taxon>Gammaproteobacteria</taxon>
        <taxon>Pseudomonadales</taxon>
        <taxon>Pseudomonadaceae</taxon>
        <taxon>Pseudomonas</taxon>
    </lineage>
</organism>
<proteinExistence type="evidence at protein level"/>
<dbReference type="EC" id="2.4.1.10" evidence="2"/>
<dbReference type="EMBL" id="AF346402">
    <property type="protein sequence ID" value="AAK49952.1"/>
    <property type="molecule type" value="Genomic_DNA"/>
</dbReference>
<dbReference type="SMR" id="Q93TM1"/>
<dbReference type="CAZy" id="GH68">
    <property type="family name" value="Glycoside Hydrolase Family 68"/>
</dbReference>
<dbReference type="GO" id="GO:0042597">
    <property type="term" value="C:periplasmic space"/>
    <property type="evidence" value="ECO:0007669"/>
    <property type="project" value="UniProtKB-SubCell"/>
</dbReference>
<dbReference type="GO" id="GO:0050053">
    <property type="term" value="F:levansucrase activity"/>
    <property type="evidence" value="ECO:0007669"/>
    <property type="project" value="UniProtKB-EC"/>
</dbReference>
<dbReference type="GO" id="GO:0009758">
    <property type="term" value="P:carbohydrate utilization"/>
    <property type="evidence" value="ECO:0007669"/>
    <property type="project" value="InterPro"/>
</dbReference>
<dbReference type="CDD" id="cd08997">
    <property type="entry name" value="GH68"/>
    <property type="match status" value="1"/>
</dbReference>
<dbReference type="FunFam" id="2.115.10.20:FF:000007">
    <property type="entry name" value="Levansucrase LscB"/>
    <property type="match status" value="1"/>
</dbReference>
<dbReference type="Gene3D" id="2.115.10.20">
    <property type="entry name" value="Glycosyl hydrolase domain, family 43"/>
    <property type="match status" value="1"/>
</dbReference>
<dbReference type="InterPro" id="IPR003469">
    <property type="entry name" value="Glyco_hydro_68"/>
</dbReference>
<dbReference type="InterPro" id="IPR023296">
    <property type="entry name" value="Glyco_hydro_beta-prop_sf"/>
</dbReference>
<dbReference type="Pfam" id="PF02435">
    <property type="entry name" value="Glyco_hydro_68"/>
    <property type="match status" value="1"/>
</dbReference>
<dbReference type="SUPFAM" id="SSF75005">
    <property type="entry name" value="Arabinanase/levansucrase/invertase"/>
    <property type="match status" value="1"/>
</dbReference>
<keyword id="KW-0119">Carbohydrate metabolism</keyword>
<keyword id="KW-0903">Direct protein sequencing</keyword>
<keyword id="KW-0328">Glycosyltransferase</keyword>
<keyword id="KW-0574">Periplasm</keyword>
<keyword id="KW-0808">Transferase</keyword>
<comment type="function">
    <text evidence="2">Catalyzes the synthesis of levan, a fructose polymer, by transferring the fructosyl moiety from sucrose to a growing acceptor molecule.</text>
</comment>
<comment type="catalytic activity">
    <reaction evidence="2">
        <text>[6)-beta-D-fructofuranosyl-(2-&gt;](n) alpha-D-glucopyranoside + sucrose = [6)-beta-D-fructofuranosyl-(2-&gt;](n+1) alpha-D-glucopyranoside + D-glucose</text>
        <dbReference type="Rhea" id="RHEA:13653"/>
        <dbReference type="Rhea" id="RHEA-COMP:13093"/>
        <dbReference type="Rhea" id="RHEA-COMP:13094"/>
        <dbReference type="ChEBI" id="CHEBI:4167"/>
        <dbReference type="ChEBI" id="CHEBI:17992"/>
        <dbReference type="ChEBI" id="CHEBI:134464"/>
        <dbReference type="EC" id="2.4.1.10"/>
    </reaction>
</comment>
<comment type="subcellular location">
    <subcellularLocation>
        <location evidence="2 3">Periplasm</location>
    </subcellularLocation>
</comment>
<comment type="induction">
    <text evidence="3 4 5">The upstream region of the gene contains a phage-associated promoter element (PAPE), which also includes the first 48 nucleotides of lscC and is essential for expression of the gene (PubMed:24670199). Even though the upstream region of the gene is sufficient to promote expression, the expression level is enhanced by the presence of the 48-bp N-terminus of lscC (PubMed:24670199). Expression is induced by the transcriptional regulator LscR, which is able to bind specifically to lsc upstream PAPE sequence (PubMed:27664099). Transcription is temperature-dependent (PubMed:17147762). Expression is strongest during growth in early logarithmic phase at 18 degrees Celsius, a temperature fostering virulence of this pathogen (PubMed:17147762).</text>
</comment>
<comment type="disruption phenotype">
    <text evidence="2">Disruption mutant does not exhibit a levan-deficient phenotype (PubMed:11344135). The lscB-lscC double mutant is completely defective in levan formation and can be complemented by either lscB or lscC (PubMed:11344135).</text>
</comment>
<comment type="miscellaneous">
    <text evidence="2">Strain PG4180 contains three levansucrase-encoding genes: lscA, lscB and lscC (PubMed:11344135). Of the three copies, only lscB and lscC have been shown to be expressed while no expression was observed for lscA under the tested growth conditions (PubMed:11344135).</text>
</comment>
<comment type="similarity">
    <text evidence="7">Belongs to the glycosyl hydrolase 68 family.</text>
</comment>
<protein>
    <recommendedName>
        <fullName evidence="6">Levansucrase LscC</fullName>
        <ecNumber evidence="2">2.4.1.10</ecNumber>
    </recommendedName>
    <alternativeName>
        <fullName evidence="7">Sucrose 6-fructosyltransferase</fullName>
    </alternativeName>
</protein>
<sequence length="431" mass="47619">MSTSSSAVSQLKNSPLAGNINYEPTVWSRADALKVNENDPTTTQPLVSADFPVMSDTVFIWDTMPLRELDGTVVSVNGWSVILTLTADRHPDDPQYLDANGRYDIKRDWEDRHGRARMCYWYSRTGKDWIFGGRVMAEGVSPTTREWAGTPILLNDKGDIDLYYTCVTPGAAVAKVRGRIVTSDQGVELKDFTQVKKLFEADGTYYQTEAQNSSWNFRDPSPFIDPNDGKLYMVFEGNVAGERGSHTVGAAELGPVPPGHEDVGGARFQVGCIGLAVAKDLSGEEWEILPPLVTAVGVNDQTERPHYVFQDGKYYLFTISHKFTYADGITGPDGVYGFVGEHLFGPYRPMNASGLVLGNPPEQPFQTYSHCVMPNGLVTSFIDSVPTEGEDYRIGGTEAPTVRILLKGDRSFVQEEYDYGYIPAMKDVQLS</sequence>